<gene>
    <name evidence="1" type="primary">secA</name>
    <name type="ordered locus">SPT_1640</name>
</gene>
<name>SECA_STRZT</name>
<comment type="function">
    <text evidence="1">Part of the Sec protein translocase complex. Interacts with the SecYEG preprotein conducting channel. Has a central role in coupling the hydrolysis of ATP to the transfer of proteins into and across the cell membrane, serving as an ATP-driven molecular motor driving the stepwise translocation of polypeptide chains across the membrane.</text>
</comment>
<comment type="catalytic activity">
    <reaction evidence="1">
        <text>ATP + H2O + cellular proteinSide 1 = ADP + phosphate + cellular proteinSide 2.</text>
        <dbReference type="EC" id="7.4.2.8"/>
    </reaction>
</comment>
<comment type="cofactor">
    <cofactor evidence="1">
        <name>Zn(2+)</name>
        <dbReference type="ChEBI" id="CHEBI:29105"/>
    </cofactor>
    <text evidence="1">May bind 1 zinc ion per subunit.</text>
</comment>
<comment type="subunit">
    <text evidence="1">Monomer and homodimer. Part of the essential Sec protein translocation apparatus which comprises SecA, SecYEG and auxiliary proteins SecDF. Other proteins may also be involved.</text>
</comment>
<comment type="subcellular location">
    <subcellularLocation>
        <location evidence="1">Cell membrane</location>
        <topology evidence="1">Peripheral membrane protein</topology>
        <orientation evidence="1">Cytoplasmic side</orientation>
    </subcellularLocation>
    <subcellularLocation>
        <location evidence="1">Cytoplasm</location>
    </subcellularLocation>
    <text evidence="1">Distribution is 50-50.</text>
</comment>
<comment type="similarity">
    <text evidence="1">Belongs to the SecA family.</text>
</comment>
<accession>C1CSW3</accession>
<protein>
    <recommendedName>
        <fullName evidence="1">Protein translocase subunit SecA</fullName>
        <ecNumber evidence="1">7.4.2.8</ecNumber>
    </recommendedName>
</protein>
<evidence type="ECO:0000255" key="1">
    <source>
        <dbReference type="HAMAP-Rule" id="MF_01382"/>
    </source>
</evidence>
<organism>
    <name type="scientific">Streptococcus pneumoniae (strain Taiwan19F-14)</name>
    <dbReference type="NCBI Taxonomy" id="487213"/>
    <lineage>
        <taxon>Bacteria</taxon>
        <taxon>Bacillati</taxon>
        <taxon>Bacillota</taxon>
        <taxon>Bacilli</taxon>
        <taxon>Lactobacillales</taxon>
        <taxon>Streptococcaceae</taxon>
        <taxon>Streptococcus</taxon>
    </lineage>
</organism>
<proteinExistence type="inferred from homology"/>
<feature type="chain" id="PRO_1000184249" description="Protein translocase subunit SecA">
    <location>
        <begin position="1"/>
        <end position="837"/>
    </location>
</feature>
<feature type="binding site" evidence="1">
    <location>
        <position position="85"/>
    </location>
    <ligand>
        <name>ATP</name>
        <dbReference type="ChEBI" id="CHEBI:30616"/>
    </ligand>
</feature>
<feature type="binding site" evidence="1">
    <location>
        <begin position="103"/>
        <end position="107"/>
    </location>
    <ligand>
        <name>ATP</name>
        <dbReference type="ChEBI" id="CHEBI:30616"/>
    </ligand>
</feature>
<feature type="binding site" evidence="1">
    <location>
        <position position="493"/>
    </location>
    <ligand>
        <name>ATP</name>
        <dbReference type="ChEBI" id="CHEBI:30616"/>
    </ligand>
</feature>
<feature type="binding site" evidence="1">
    <location>
        <position position="821"/>
    </location>
    <ligand>
        <name>Zn(2+)</name>
        <dbReference type="ChEBI" id="CHEBI:29105"/>
    </ligand>
</feature>
<feature type="binding site" evidence="1">
    <location>
        <position position="823"/>
    </location>
    <ligand>
        <name>Zn(2+)</name>
        <dbReference type="ChEBI" id="CHEBI:29105"/>
    </ligand>
</feature>
<feature type="binding site" evidence="1">
    <location>
        <position position="832"/>
    </location>
    <ligand>
        <name>Zn(2+)</name>
        <dbReference type="ChEBI" id="CHEBI:29105"/>
    </ligand>
</feature>
<feature type="binding site" evidence="1">
    <location>
        <position position="833"/>
    </location>
    <ligand>
        <name>Zn(2+)</name>
        <dbReference type="ChEBI" id="CHEBI:29105"/>
    </ligand>
</feature>
<sequence length="837" mass="95030">MANILKTIIENDKGEIRRLEKMADKVFKYEDQMAALTDDQLKAKTVEFKERYQNGESLDSLLYEAFAVVREGAKRVLGLFPYKVQVMGGIVLHHGDVPEMRTGEGKTLTATMPVYLNALSGKGVHVVTVNEYLSERDATEMGELYSWLGLSVGINLATKSPMEKKEAYECDITYSTNSEIGFDYLRDNMVVRAENMVQRPLNYALVDEVDSILIDEARTPLIVSGANAVETSQLYHMADHYVKSLNKDDYIIDVQSKTIGLSDSGIDRAESYFKLENLYDIENVALTHFIDNALRANYIMLLDIDYVVSEEQEILIVDQFTGRTMEGRRYSDGLHQAIEAKEGVPIQDETKTSASITYQNLFRMYKKLSGMTGTGKTEEEEFREIYNIRVIPIPTNRPVQRIDHSDLLYASIESKFKAVVEDVKARYQKGQPVLVGTVAVETSDYISKKLVAAGVPHEVLNAKNHYREAQIIMNAGQRGAVTIATNMAGRGTDIKLGEGVRELGGLCVIGTERHESRRIDNQLRGRSGRQGDPGESQFYLSLEDDLMKRFGSERLKGIFERLNMSEEAIESRMLTRQVEAAQKRVEGNNYDTRKQVLQYDDVMREQREIIYAQRYDVITADRDLAPEIQSMIKRTIERVVDGHARAKQDEKLEAILNFAKYNLLPEDSITMEDLSGLSDKAIKEELFQRALKVYDSQVSKLRDEEAVKEFQKVLILRVVDNKWTDHIDALDQLRNAVGLRGYAQNNPVVEYQAEGFRMFNDMIGSIEFDVTRLMMKAQIHEQERPQAERHISTTATRNIAAHQASMPEDLDLSQIGRNELCPCGSGKKFKNCHGKRK</sequence>
<reference key="1">
    <citation type="journal article" date="2010" name="Genome Biol.">
        <title>Structure and dynamics of the pan-genome of Streptococcus pneumoniae and closely related species.</title>
        <authorList>
            <person name="Donati C."/>
            <person name="Hiller N.L."/>
            <person name="Tettelin H."/>
            <person name="Muzzi A."/>
            <person name="Croucher N.J."/>
            <person name="Angiuoli S.V."/>
            <person name="Oggioni M."/>
            <person name="Dunning Hotopp J.C."/>
            <person name="Hu F.Z."/>
            <person name="Riley D.R."/>
            <person name="Covacci A."/>
            <person name="Mitchell T.J."/>
            <person name="Bentley S.D."/>
            <person name="Kilian M."/>
            <person name="Ehrlich G.D."/>
            <person name="Rappuoli R."/>
            <person name="Moxon E.R."/>
            <person name="Masignani V."/>
        </authorList>
    </citation>
    <scope>NUCLEOTIDE SEQUENCE [LARGE SCALE GENOMIC DNA]</scope>
    <source>
        <strain>Taiwan19F-14</strain>
    </source>
</reference>
<dbReference type="EC" id="7.4.2.8" evidence="1"/>
<dbReference type="EMBL" id="CP000921">
    <property type="protein sequence ID" value="ACO23785.1"/>
    <property type="molecule type" value="Genomic_DNA"/>
</dbReference>
<dbReference type="RefSeq" id="WP_001274088.1">
    <property type="nucleotide sequence ID" value="NC_012469.1"/>
</dbReference>
<dbReference type="SMR" id="C1CSW3"/>
<dbReference type="KEGG" id="snt:SPT_1640"/>
<dbReference type="HOGENOM" id="CLU_005314_3_0_9"/>
<dbReference type="GO" id="GO:0031522">
    <property type="term" value="C:cell envelope Sec protein transport complex"/>
    <property type="evidence" value="ECO:0007669"/>
    <property type="project" value="TreeGrafter"/>
</dbReference>
<dbReference type="GO" id="GO:0005829">
    <property type="term" value="C:cytosol"/>
    <property type="evidence" value="ECO:0007669"/>
    <property type="project" value="TreeGrafter"/>
</dbReference>
<dbReference type="GO" id="GO:0005886">
    <property type="term" value="C:plasma membrane"/>
    <property type="evidence" value="ECO:0007669"/>
    <property type="project" value="UniProtKB-SubCell"/>
</dbReference>
<dbReference type="GO" id="GO:0005524">
    <property type="term" value="F:ATP binding"/>
    <property type="evidence" value="ECO:0007669"/>
    <property type="project" value="UniProtKB-UniRule"/>
</dbReference>
<dbReference type="GO" id="GO:0046872">
    <property type="term" value="F:metal ion binding"/>
    <property type="evidence" value="ECO:0007669"/>
    <property type="project" value="UniProtKB-KW"/>
</dbReference>
<dbReference type="GO" id="GO:0008564">
    <property type="term" value="F:protein-exporting ATPase activity"/>
    <property type="evidence" value="ECO:0007669"/>
    <property type="project" value="UniProtKB-EC"/>
</dbReference>
<dbReference type="GO" id="GO:0065002">
    <property type="term" value="P:intracellular protein transmembrane transport"/>
    <property type="evidence" value="ECO:0007669"/>
    <property type="project" value="UniProtKB-UniRule"/>
</dbReference>
<dbReference type="GO" id="GO:0017038">
    <property type="term" value="P:protein import"/>
    <property type="evidence" value="ECO:0007669"/>
    <property type="project" value="InterPro"/>
</dbReference>
<dbReference type="GO" id="GO:0006605">
    <property type="term" value="P:protein targeting"/>
    <property type="evidence" value="ECO:0007669"/>
    <property type="project" value="UniProtKB-UniRule"/>
</dbReference>
<dbReference type="GO" id="GO:0043952">
    <property type="term" value="P:protein transport by the Sec complex"/>
    <property type="evidence" value="ECO:0007669"/>
    <property type="project" value="TreeGrafter"/>
</dbReference>
<dbReference type="CDD" id="cd17928">
    <property type="entry name" value="DEXDc_SecA"/>
    <property type="match status" value="1"/>
</dbReference>
<dbReference type="CDD" id="cd18803">
    <property type="entry name" value="SF2_C_secA"/>
    <property type="match status" value="1"/>
</dbReference>
<dbReference type="FunFam" id="1.10.3060.10:FF:000002">
    <property type="entry name" value="Preprotein translocase subunit SecA"/>
    <property type="match status" value="1"/>
</dbReference>
<dbReference type="FunFam" id="3.40.50.300:FF:000429">
    <property type="entry name" value="Preprotein translocase subunit SecA"/>
    <property type="match status" value="1"/>
</dbReference>
<dbReference type="FunFam" id="3.90.1440.10:FF:000001">
    <property type="entry name" value="Preprotein translocase subunit SecA"/>
    <property type="match status" value="1"/>
</dbReference>
<dbReference type="Gene3D" id="1.10.3060.10">
    <property type="entry name" value="Helical scaffold and wing domains of SecA"/>
    <property type="match status" value="1"/>
</dbReference>
<dbReference type="Gene3D" id="3.40.50.300">
    <property type="entry name" value="P-loop containing nucleotide triphosphate hydrolases"/>
    <property type="match status" value="3"/>
</dbReference>
<dbReference type="Gene3D" id="3.90.1440.10">
    <property type="entry name" value="SecA, preprotein cross-linking domain"/>
    <property type="match status" value="1"/>
</dbReference>
<dbReference type="HAMAP" id="MF_01382">
    <property type="entry name" value="SecA"/>
    <property type="match status" value="1"/>
</dbReference>
<dbReference type="InterPro" id="IPR014001">
    <property type="entry name" value="Helicase_ATP-bd"/>
</dbReference>
<dbReference type="InterPro" id="IPR001650">
    <property type="entry name" value="Helicase_C-like"/>
</dbReference>
<dbReference type="InterPro" id="IPR027417">
    <property type="entry name" value="P-loop_NTPase"/>
</dbReference>
<dbReference type="InterPro" id="IPR004027">
    <property type="entry name" value="SEC_C_motif"/>
</dbReference>
<dbReference type="InterPro" id="IPR000185">
    <property type="entry name" value="SecA"/>
</dbReference>
<dbReference type="InterPro" id="IPR020937">
    <property type="entry name" value="SecA_CS"/>
</dbReference>
<dbReference type="InterPro" id="IPR011115">
    <property type="entry name" value="SecA_DEAD"/>
</dbReference>
<dbReference type="InterPro" id="IPR014018">
    <property type="entry name" value="SecA_motor_DEAD"/>
</dbReference>
<dbReference type="InterPro" id="IPR011130">
    <property type="entry name" value="SecA_preprotein_X-link_dom"/>
</dbReference>
<dbReference type="InterPro" id="IPR044722">
    <property type="entry name" value="SecA_SF2_C"/>
</dbReference>
<dbReference type="InterPro" id="IPR011116">
    <property type="entry name" value="SecA_Wing/Scaffold"/>
</dbReference>
<dbReference type="InterPro" id="IPR036266">
    <property type="entry name" value="SecA_Wing/Scaffold_sf"/>
</dbReference>
<dbReference type="InterPro" id="IPR036670">
    <property type="entry name" value="SecA_X-link_sf"/>
</dbReference>
<dbReference type="NCBIfam" id="NF006630">
    <property type="entry name" value="PRK09200.1"/>
    <property type="match status" value="1"/>
</dbReference>
<dbReference type="NCBIfam" id="TIGR00963">
    <property type="entry name" value="secA"/>
    <property type="match status" value="1"/>
</dbReference>
<dbReference type="PANTHER" id="PTHR30612:SF0">
    <property type="entry name" value="CHLOROPLAST PROTEIN-TRANSPORTING ATPASE"/>
    <property type="match status" value="1"/>
</dbReference>
<dbReference type="PANTHER" id="PTHR30612">
    <property type="entry name" value="SECA INNER MEMBRANE COMPONENT OF SEC PROTEIN SECRETION SYSTEM"/>
    <property type="match status" value="1"/>
</dbReference>
<dbReference type="Pfam" id="PF21090">
    <property type="entry name" value="P-loop_SecA"/>
    <property type="match status" value="2"/>
</dbReference>
<dbReference type="Pfam" id="PF02810">
    <property type="entry name" value="SEC-C"/>
    <property type="match status" value="1"/>
</dbReference>
<dbReference type="Pfam" id="PF07517">
    <property type="entry name" value="SecA_DEAD"/>
    <property type="match status" value="1"/>
</dbReference>
<dbReference type="Pfam" id="PF01043">
    <property type="entry name" value="SecA_PP_bind"/>
    <property type="match status" value="1"/>
</dbReference>
<dbReference type="Pfam" id="PF07516">
    <property type="entry name" value="SecA_SW"/>
    <property type="match status" value="1"/>
</dbReference>
<dbReference type="PRINTS" id="PR00906">
    <property type="entry name" value="SECA"/>
</dbReference>
<dbReference type="SMART" id="SM00957">
    <property type="entry name" value="SecA_DEAD"/>
    <property type="match status" value="1"/>
</dbReference>
<dbReference type="SMART" id="SM00958">
    <property type="entry name" value="SecA_PP_bind"/>
    <property type="match status" value="1"/>
</dbReference>
<dbReference type="SUPFAM" id="SSF81886">
    <property type="entry name" value="Helical scaffold and wing domains of SecA"/>
    <property type="match status" value="1"/>
</dbReference>
<dbReference type="SUPFAM" id="SSF52540">
    <property type="entry name" value="P-loop containing nucleoside triphosphate hydrolases"/>
    <property type="match status" value="2"/>
</dbReference>
<dbReference type="SUPFAM" id="SSF81767">
    <property type="entry name" value="Pre-protein crosslinking domain of SecA"/>
    <property type="match status" value="1"/>
</dbReference>
<dbReference type="PROSITE" id="PS01312">
    <property type="entry name" value="SECA"/>
    <property type="match status" value="1"/>
</dbReference>
<dbReference type="PROSITE" id="PS51196">
    <property type="entry name" value="SECA_MOTOR_DEAD"/>
    <property type="match status" value="1"/>
</dbReference>
<keyword id="KW-0067">ATP-binding</keyword>
<keyword id="KW-1003">Cell membrane</keyword>
<keyword id="KW-0963">Cytoplasm</keyword>
<keyword id="KW-0472">Membrane</keyword>
<keyword id="KW-0479">Metal-binding</keyword>
<keyword id="KW-0547">Nucleotide-binding</keyword>
<keyword id="KW-0653">Protein transport</keyword>
<keyword id="KW-1278">Translocase</keyword>
<keyword id="KW-0811">Translocation</keyword>
<keyword id="KW-0813">Transport</keyword>
<keyword id="KW-0862">Zinc</keyword>